<dbReference type="EC" id="7.1.1.-" evidence="1"/>
<dbReference type="EMBL" id="CP001349">
    <property type="protein sequence ID" value="ACL59012.1"/>
    <property type="molecule type" value="Genomic_DNA"/>
</dbReference>
<dbReference type="RefSeq" id="WP_015930661.1">
    <property type="nucleotide sequence ID" value="NC_011894.1"/>
</dbReference>
<dbReference type="SMR" id="B8IUV4"/>
<dbReference type="STRING" id="460265.Mnod_4134"/>
<dbReference type="KEGG" id="mno:Mnod_4134"/>
<dbReference type="eggNOG" id="COG1143">
    <property type="taxonomic scope" value="Bacteria"/>
</dbReference>
<dbReference type="HOGENOM" id="CLU_067218_5_1_5"/>
<dbReference type="OrthoDB" id="9808559at2"/>
<dbReference type="Proteomes" id="UP000008207">
    <property type="component" value="Chromosome"/>
</dbReference>
<dbReference type="GO" id="GO:0005886">
    <property type="term" value="C:plasma membrane"/>
    <property type="evidence" value="ECO:0007669"/>
    <property type="project" value="UniProtKB-SubCell"/>
</dbReference>
<dbReference type="GO" id="GO:0051539">
    <property type="term" value="F:4 iron, 4 sulfur cluster binding"/>
    <property type="evidence" value="ECO:0007669"/>
    <property type="project" value="UniProtKB-KW"/>
</dbReference>
<dbReference type="GO" id="GO:0005506">
    <property type="term" value="F:iron ion binding"/>
    <property type="evidence" value="ECO:0007669"/>
    <property type="project" value="UniProtKB-UniRule"/>
</dbReference>
<dbReference type="GO" id="GO:0050136">
    <property type="term" value="F:NADH:ubiquinone reductase (non-electrogenic) activity"/>
    <property type="evidence" value="ECO:0007669"/>
    <property type="project" value="UniProtKB-UniRule"/>
</dbReference>
<dbReference type="GO" id="GO:0048038">
    <property type="term" value="F:quinone binding"/>
    <property type="evidence" value="ECO:0007669"/>
    <property type="project" value="UniProtKB-KW"/>
</dbReference>
<dbReference type="GO" id="GO:0009060">
    <property type="term" value="P:aerobic respiration"/>
    <property type="evidence" value="ECO:0007669"/>
    <property type="project" value="TreeGrafter"/>
</dbReference>
<dbReference type="FunFam" id="3.30.70.3270:FF:000001">
    <property type="entry name" value="NADH-quinone oxidoreductase subunit I 1"/>
    <property type="match status" value="1"/>
</dbReference>
<dbReference type="Gene3D" id="3.30.70.3270">
    <property type="match status" value="1"/>
</dbReference>
<dbReference type="HAMAP" id="MF_01351">
    <property type="entry name" value="NDH1_NuoI"/>
    <property type="match status" value="1"/>
</dbReference>
<dbReference type="InterPro" id="IPR017896">
    <property type="entry name" value="4Fe4S_Fe-S-bd"/>
</dbReference>
<dbReference type="InterPro" id="IPR017900">
    <property type="entry name" value="4Fe4S_Fe_S_CS"/>
</dbReference>
<dbReference type="InterPro" id="IPR010226">
    <property type="entry name" value="NADH_quinone_OxRdtase_chainI"/>
</dbReference>
<dbReference type="NCBIfam" id="TIGR01971">
    <property type="entry name" value="NuoI"/>
    <property type="match status" value="1"/>
</dbReference>
<dbReference type="NCBIfam" id="NF004538">
    <property type="entry name" value="PRK05888.1-4"/>
    <property type="match status" value="1"/>
</dbReference>
<dbReference type="NCBIfam" id="NF004539">
    <property type="entry name" value="PRK05888.1-5"/>
    <property type="match status" value="1"/>
</dbReference>
<dbReference type="PANTHER" id="PTHR10849:SF20">
    <property type="entry name" value="NADH DEHYDROGENASE [UBIQUINONE] IRON-SULFUR PROTEIN 8, MITOCHONDRIAL"/>
    <property type="match status" value="1"/>
</dbReference>
<dbReference type="PANTHER" id="PTHR10849">
    <property type="entry name" value="NADH DEHYDROGENASE UBIQUINONE IRON-SULFUR PROTEIN 8, MITOCHONDRIAL"/>
    <property type="match status" value="1"/>
</dbReference>
<dbReference type="Pfam" id="PF12838">
    <property type="entry name" value="Fer4_7"/>
    <property type="match status" value="1"/>
</dbReference>
<dbReference type="SUPFAM" id="SSF54862">
    <property type="entry name" value="4Fe-4S ferredoxins"/>
    <property type="match status" value="1"/>
</dbReference>
<dbReference type="PROSITE" id="PS00198">
    <property type="entry name" value="4FE4S_FER_1"/>
    <property type="match status" value="2"/>
</dbReference>
<dbReference type="PROSITE" id="PS51379">
    <property type="entry name" value="4FE4S_FER_2"/>
    <property type="match status" value="2"/>
</dbReference>
<accession>B8IUV4</accession>
<evidence type="ECO:0000255" key="1">
    <source>
        <dbReference type="HAMAP-Rule" id="MF_01351"/>
    </source>
</evidence>
<protein>
    <recommendedName>
        <fullName evidence="1">NADH-quinone oxidoreductase subunit I</fullName>
        <ecNumber evidence="1">7.1.1.-</ecNumber>
    </recommendedName>
    <alternativeName>
        <fullName evidence="1">NADH dehydrogenase I subunit I</fullName>
    </alternativeName>
    <alternativeName>
        <fullName evidence="1">NDH-1 subunit I</fullName>
    </alternativeName>
</protein>
<reference key="1">
    <citation type="submission" date="2009-01" db="EMBL/GenBank/DDBJ databases">
        <title>Complete sequence of chromosome of Methylobacterium nodulans ORS 2060.</title>
        <authorList>
            <consortium name="US DOE Joint Genome Institute"/>
            <person name="Lucas S."/>
            <person name="Copeland A."/>
            <person name="Lapidus A."/>
            <person name="Glavina del Rio T."/>
            <person name="Dalin E."/>
            <person name="Tice H."/>
            <person name="Bruce D."/>
            <person name="Goodwin L."/>
            <person name="Pitluck S."/>
            <person name="Sims D."/>
            <person name="Brettin T."/>
            <person name="Detter J.C."/>
            <person name="Han C."/>
            <person name="Larimer F."/>
            <person name="Land M."/>
            <person name="Hauser L."/>
            <person name="Kyrpides N."/>
            <person name="Ivanova N."/>
            <person name="Marx C.J."/>
            <person name="Richardson P."/>
        </authorList>
    </citation>
    <scope>NUCLEOTIDE SEQUENCE [LARGE SCALE GENOMIC DNA]</scope>
    <source>
        <strain>LMG 21967 / CNCM I-2342 / ORS 2060</strain>
    </source>
</reference>
<proteinExistence type="inferred from homology"/>
<gene>
    <name evidence="1" type="primary">nuoI</name>
    <name type="ordered locus">Mnod_4134</name>
</gene>
<organism>
    <name type="scientific">Methylobacterium nodulans (strain LMG 21967 / CNCM I-2342 / ORS 2060)</name>
    <dbReference type="NCBI Taxonomy" id="460265"/>
    <lineage>
        <taxon>Bacteria</taxon>
        <taxon>Pseudomonadati</taxon>
        <taxon>Pseudomonadota</taxon>
        <taxon>Alphaproteobacteria</taxon>
        <taxon>Hyphomicrobiales</taxon>
        <taxon>Methylobacteriaceae</taxon>
        <taxon>Methylobacterium</taxon>
    </lineage>
</organism>
<name>NUOI_METNO</name>
<keyword id="KW-0004">4Fe-4S</keyword>
<keyword id="KW-0997">Cell inner membrane</keyword>
<keyword id="KW-1003">Cell membrane</keyword>
<keyword id="KW-0408">Iron</keyword>
<keyword id="KW-0411">Iron-sulfur</keyword>
<keyword id="KW-0472">Membrane</keyword>
<keyword id="KW-0479">Metal-binding</keyword>
<keyword id="KW-0520">NAD</keyword>
<keyword id="KW-0874">Quinone</keyword>
<keyword id="KW-1185">Reference proteome</keyword>
<keyword id="KW-0677">Repeat</keyword>
<keyword id="KW-1278">Translocase</keyword>
<keyword id="KW-0830">Ubiquinone</keyword>
<feature type="chain" id="PRO_1000166639" description="NADH-quinone oxidoreductase subunit I">
    <location>
        <begin position="1"/>
        <end position="162"/>
    </location>
</feature>
<feature type="domain" description="4Fe-4S ferredoxin-type 1" evidence="1">
    <location>
        <begin position="52"/>
        <end position="82"/>
    </location>
</feature>
<feature type="domain" description="4Fe-4S ferredoxin-type 2" evidence="1">
    <location>
        <begin position="93"/>
        <end position="122"/>
    </location>
</feature>
<feature type="binding site" evidence="1">
    <location>
        <position position="62"/>
    </location>
    <ligand>
        <name>[4Fe-4S] cluster</name>
        <dbReference type="ChEBI" id="CHEBI:49883"/>
        <label>1</label>
    </ligand>
</feature>
<feature type="binding site" evidence="1">
    <location>
        <position position="65"/>
    </location>
    <ligand>
        <name>[4Fe-4S] cluster</name>
        <dbReference type="ChEBI" id="CHEBI:49883"/>
        <label>1</label>
    </ligand>
</feature>
<feature type="binding site" evidence="1">
    <location>
        <position position="68"/>
    </location>
    <ligand>
        <name>[4Fe-4S] cluster</name>
        <dbReference type="ChEBI" id="CHEBI:49883"/>
        <label>1</label>
    </ligand>
</feature>
<feature type="binding site" evidence="1">
    <location>
        <position position="72"/>
    </location>
    <ligand>
        <name>[4Fe-4S] cluster</name>
        <dbReference type="ChEBI" id="CHEBI:49883"/>
        <label>2</label>
    </ligand>
</feature>
<feature type="binding site" evidence="1">
    <location>
        <position position="102"/>
    </location>
    <ligand>
        <name>[4Fe-4S] cluster</name>
        <dbReference type="ChEBI" id="CHEBI:49883"/>
        <label>2</label>
    </ligand>
</feature>
<feature type="binding site" evidence="1">
    <location>
        <position position="105"/>
    </location>
    <ligand>
        <name>[4Fe-4S] cluster</name>
        <dbReference type="ChEBI" id="CHEBI:49883"/>
        <label>2</label>
    </ligand>
</feature>
<feature type="binding site" evidence="1">
    <location>
        <position position="108"/>
    </location>
    <ligand>
        <name>[4Fe-4S] cluster</name>
        <dbReference type="ChEBI" id="CHEBI:49883"/>
        <label>2</label>
    </ligand>
</feature>
<feature type="binding site" evidence="1">
    <location>
        <position position="112"/>
    </location>
    <ligand>
        <name>[4Fe-4S] cluster</name>
        <dbReference type="ChEBI" id="CHEBI:49883"/>
        <label>1</label>
    </ligand>
</feature>
<comment type="function">
    <text evidence="1">NDH-1 shuttles electrons from NADH, via FMN and iron-sulfur (Fe-S) centers, to quinones in the respiratory chain. The immediate electron acceptor for the enzyme in this species is believed to be ubiquinone. Couples the redox reaction to proton translocation (for every two electrons transferred, four hydrogen ions are translocated across the cytoplasmic membrane), and thus conserves the redox energy in a proton gradient.</text>
</comment>
<comment type="catalytic activity">
    <reaction evidence="1">
        <text>a quinone + NADH + 5 H(+)(in) = a quinol + NAD(+) + 4 H(+)(out)</text>
        <dbReference type="Rhea" id="RHEA:57888"/>
        <dbReference type="ChEBI" id="CHEBI:15378"/>
        <dbReference type="ChEBI" id="CHEBI:24646"/>
        <dbReference type="ChEBI" id="CHEBI:57540"/>
        <dbReference type="ChEBI" id="CHEBI:57945"/>
        <dbReference type="ChEBI" id="CHEBI:132124"/>
    </reaction>
</comment>
<comment type="cofactor">
    <cofactor evidence="1">
        <name>[4Fe-4S] cluster</name>
        <dbReference type="ChEBI" id="CHEBI:49883"/>
    </cofactor>
    <text evidence="1">Binds 2 [4Fe-4S] clusters per subunit.</text>
</comment>
<comment type="subunit">
    <text evidence="1">NDH-1 is composed of 14 different subunits. Subunits NuoA, H, J, K, L, M, N constitute the membrane sector of the complex.</text>
</comment>
<comment type="subcellular location">
    <subcellularLocation>
        <location evidence="1">Cell inner membrane</location>
        <topology evidence="1">Peripheral membrane protein</topology>
    </subcellularLocation>
</comment>
<comment type="similarity">
    <text evidence="1">Belongs to the complex I 23 kDa subunit family.</text>
</comment>
<sequence>MRLDQVARSLLLKEFVSGFALAMRYLFKPKATINYPFEMGHRSPRFRGEHALRRYPNGEERCIACKLCEAICPAQAITIEAGPRRNDGTRRTTRYDIDMVKCIYCGMCQEACPVDAIVEGPNFEFSVETREELLYDKQKLLANGDRWEREIARNIAADAPYR</sequence>